<name>MYO5A_HUMAN</name>
<evidence type="ECO:0000250" key="1">
    <source>
        <dbReference type="UniProtKB" id="Q99104"/>
    </source>
</evidence>
<evidence type="ECO:0000250" key="2">
    <source>
        <dbReference type="UniProtKB" id="Q9QYF3"/>
    </source>
</evidence>
<evidence type="ECO:0000255" key="3"/>
<evidence type="ECO:0000255" key="4">
    <source>
        <dbReference type="PROSITE-ProRule" id="PRU00116"/>
    </source>
</evidence>
<evidence type="ECO:0000255" key="5">
    <source>
        <dbReference type="PROSITE-ProRule" id="PRU00503"/>
    </source>
</evidence>
<evidence type="ECO:0000255" key="6">
    <source>
        <dbReference type="PROSITE-ProRule" id="PRU00782"/>
    </source>
</evidence>
<evidence type="ECO:0000255" key="7">
    <source>
        <dbReference type="PROSITE-ProRule" id="PRU01190"/>
    </source>
</evidence>
<evidence type="ECO:0000256" key="8">
    <source>
        <dbReference type="SAM" id="MobiDB-lite"/>
    </source>
</evidence>
<evidence type="ECO:0000269" key="9">
    <source>
    </source>
</evidence>
<evidence type="ECO:0000269" key="10">
    <source>
    </source>
</evidence>
<evidence type="ECO:0000269" key="11">
    <source>
    </source>
</evidence>
<evidence type="ECO:0000269" key="12">
    <source>
    </source>
</evidence>
<evidence type="ECO:0000269" key="13">
    <source>
    </source>
</evidence>
<evidence type="ECO:0000269" key="14">
    <source>
    </source>
</evidence>
<evidence type="ECO:0000269" key="15">
    <source>
    </source>
</evidence>
<evidence type="ECO:0000269" key="16">
    <source>
    </source>
</evidence>
<evidence type="ECO:0000303" key="17">
    <source>
    </source>
</evidence>
<evidence type="ECO:0000303" key="18">
    <source>
    </source>
</evidence>
<evidence type="ECO:0000303" key="19">
    <source ref="1"/>
</evidence>
<evidence type="ECO:0000303" key="20">
    <source ref="7"/>
</evidence>
<evidence type="ECO:0000305" key="21"/>
<evidence type="ECO:0000305" key="22">
    <source>
    </source>
</evidence>
<evidence type="ECO:0007744" key="23">
    <source>
    </source>
</evidence>
<evidence type="ECO:0007744" key="24">
    <source>
    </source>
</evidence>
<evidence type="ECO:0007744" key="25">
    <source>
    </source>
</evidence>
<evidence type="ECO:0007829" key="26">
    <source>
        <dbReference type="PDB" id="4D07"/>
    </source>
</evidence>
<evidence type="ECO:0007829" key="27">
    <source>
        <dbReference type="PDB" id="4LLI"/>
    </source>
</evidence>
<evidence type="ECO:0007829" key="28">
    <source>
        <dbReference type="PDB" id="4LX2"/>
    </source>
</evidence>
<evidence type="ECO:0007829" key="29">
    <source>
        <dbReference type="PDB" id="5JCZ"/>
    </source>
</evidence>
<reference key="1">
    <citation type="submission" date="1996-09" db="EMBL/GenBank/DDBJ databases">
        <title>The complete cDNA for human myosin heavy chain 12, a class V myosin.</title>
        <authorList>
            <person name="Meurers B.H."/>
            <person name="Zimmermann R."/>
            <person name="Vosberg H.P."/>
        </authorList>
    </citation>
    <scope>NUCLEOTIDE SEQUENCE [MRNA] (ISOFORMS 1 AND 2)</scope>
    <source>
        <tissue>Skin</tissue>
    </source>
</reference>
<reference key="2">
    <citation type="journal article" date="1997" name="Nat. Genet.">
        <title>Griscelli disease maps to chromosome 15q21 and is associated with mutations in the myosin-Va gene.</title>
        <authorList>
            <person name="Pastural E."/>
            <person name="Barrat F.J."/>
            <person name="Dufourcq-Lagelouse R."/>
            <person name="Certain S."/>
            <person name="Sanal O."/>
            <person name="Jabado N."/>
            <person name="Seger R."/>
            <person name="Griscelli C."/>
            <person name="Fischer A."/>
            <person name="de Saint Basile G."/>
        </authorList>
    </citation>
    <scope>NUCLEOTIDE SEQUENCE [MRNA] (ISOFORM 1)</scope>
    <scope>VARIANT CYS-1246</scope>
</reference>
<reference key="3">
    <citation type="journal article" date="1999" name="Nat. Genet.">
        <authorList>
            <person name="Pastural E."/>
            <person name="Barrat F.J."/>
            <person name="Dufourcq-Lagelouse R."/>
            <person name="Certain S."/>
            <person name="Sanal O."/>
            <person name="Jabado N."/>
            <person name="Seger R."/>
            <person name="Griscelli C."/>
            <person name="Fischer A."/>
            <person name="de Saint Basile G."/>
        </authorList>
    </citation>
    <scope>ERRATUM OF PUBMED:9207796</scope>
</reference>
<reference key="4">
    <citation type="journal article" date="2006" name="Nature">
        <title>Analysis of the DNA sequence and duplication history of human chromosome 15.</title>
        <authorList>
            <person name="Zody M.C."/>
            <person name="Garber M."/>
            <person name="Sharpe T."/>
            <person name="Young S.K."/>
            <person name="Rowen L."/>
            <person name="O'Neill K."/>
            <person name="Whittaker C.A."/>
            <person name="Kamal M."/>
            <person name="Chang J.L."/>
            <person name="Cuomo C.A."/>
            <person name="Dewar K."/>
            <person name="FitzGerald M.G."/>
            <person name="Kodira C.D."/>
            <person name="Madan A."/>
            <person name="Qin S."/>
            <person name="Yang X."/>
            <person name="Abbasi N."/>
            <person name="Abouelleil A."/>
            <person name="Arachchi H.M."/>
            <person name="Baradarani L."/>
            <person name="Birditt B."/>
            <person name="Bloom S."/>
            <person name="Bloom T."/>
            <person name="Borowsky M.L."/>
            <person name="Burke J."/>
            <person name="Butler J."/>
            <person name="Cook A."/>
            <person name="DeArellano K."/>
            <person name="DeCaprio D."/>
            <person name="Dorris L. III"/>
            <person name="Dors M."/>
            <person name="Eichler E.E."/>
            <person name="Engels R."/>
            <person name="Fahey J."/>
            <person name="Fleetwood P."/>
            <person name="Friedman C."/>
            <person name="Gearin G."/>
            <person name="Hall J.L."/>
            <person name="Hensley G."/>
            <person name="Johnson E."/>
            <person name="Jones C."/>
            <person name="Kamat A."/>
            <person name="Kaur A."/>
            <person name="Locke D.P."/>
            <person name="Madan A."/>
            <person name="Munson G."/>
            <person name="Jaffe D.B."/>
            <person name="Lui A."/>
            <person name="Macdonald P."/>
            <person name="Mauceli E."/>
            <person name="Naylor J.W."/>
            <person name="Nesbitt R."/>
            <person name="Nicol R."/>
            <person name="O'Leary S.B."/>
            <person name="Ratcliffe A."/>
            <person name="Rounsley S."/>
            <person name="She X."/>
            <person name="Sneddon K.M.B."/>
            <person name="Stewart S."/>
            <person name="Sougnez C."/>
            <person name="Stone S.M."/>
            <person name="Topham K."/>
            <person name="Vincent D."/>
            <person name="Wang S."/>
            <person name="Zimmer A.R."/>
            <person name="Birren B.W."/>
            <person name="Hood L."/>
            <person name="Lander E.S."/>
            <person name="Nusbaum C."/>
        </authorList>
    </citation>
    <scope>NUCLEOTIDE SEQUENCE [LARGE SCALE GENOMIC DNA]</scope>
</reference>
<reference key="5">
    <citation type="journal article" date="1994" name="Genomics">
        <title>Cloning, analysis, and chromosomal localization of myoxin (MYH12), the human homologue to the mouse dilute gene.</title>
        <authorList>
            <person name="Engle L.J."/>
            <person name="Kennett R.H."/>
        </authorList>
    </citation>
    <scope>NUCLEOTIDE SEQUENCE [MRNA] OF 638-1477 (ISOFORM 2)</scope>
    <source>
        <tissue>Fetal brain</tissue>
    </source>
</reference>
<reference key="6">
    <citation type="journal article" date="1995" name="Cytogenet. Cell Genet.">
        <title>Cloning and regional assignment of the human myosin heavy chain 12 (MYH12) gene to chromosome band 15q21.</title>
        <authorList>
            <person name="Moore K.J."/>
            <person name="Testa J.R."/>
            <person name="Francke U."/>
            <person name="Milatovich A."/>
            <person name="Copeland N.G."/>
            <person name="Jenkins N.A."/>
        </authorList>
    </citation>
    <scope>NUCLEOTIDE SEQUENCE [MRNA] OF 1061-1498 (ISOFORM 2)</scope>
    <source>
        <tissue>Brain</tissue>
    </source>
</reference>
<reference key="7">
    <citation type="submission" date="1998-03" db="EMBL/GenBank/DDBJ databases">
        <title>Inhibition of dendrite formation in melanocytes transiently transfected with antisense DNA to myosin V.</title>
        <authorList>
            <person name="Edgar A.J."/>
            <person name="Bennett J.P."/>
        </authorList>
    </citation>
    <scope>NUCLEOTIDE SEQUENCE [MRNA] OF 1358-1460 (ISOFORM 3)</scope>
</reference>
<reference key="8">
    <citation type="journal article" date="1999" name="Nature">
        <title>Myosin-V is a processive actin-based motor.</title>
        <authorList>
            <person name="Mehta A.D."/>
            <person name="Rock R.S."/>
            <person name="Rief M."/>
            <person name="Spudich J.A."/>
            <person name="Mooseker M.S."/>
            <person name="Cheney R.E."/>
        </authorList>
    </citation>
    <scope>FUNCTION</scope>
    <scope>CATALYTIC ACTIVITY</scope>
</reference>
<reference key="9">
    <citation type="journal article" date="2002" name="FEBS Lett.">
        <title>Melanophilin directly links Rab27a and myosin Va through its distinct coiled-coil regions.</title>
        <authorList>
            <person name="Nagashima K."/>
            <person name="Torii S."/>
            <person name="Yi Z."/>
            <person name="Igarashi M."/>
            <person name="Okamoto K."/>
            <person name="Takeuchi T."/>
            <person name="Izumi T."/>
        </authorList>
    </citation>
    <scope>INTERACTION WITH MLPH</scope>
</reference>
<reference key="10">
    <citation type="journal article" date="2008" name="Proc. Natl. Acad. Sci. U.S.A.">
        <title>A quantitative atlas of mitotic phosphorylation.</title>
        <authorList>
            <person name="Dephoure N."/>
            <person name="Zhou C."/>
            <person name="Villen J."/>
            <person name="Beausoleil S.A."/>
            <person name="Bakalarski C.E."/>
            <person name="Elledge S.J."/>
            <person name="Gygi S.P."/>
        </authorList>
    </citation>
    <scope>IDENTIFICATION BY MASS SPECTROMETRY [LARGE SCALE ANALYSIS]</scope>
    <source>
        <tissue>Cervix carcinoma</tissue>
    </source>
</reference>
<reference key="11">
    <citation type="journal article" date="2009" name="Anal. Chem.">
        <title>Lys-N and trypsin cover complementary parts of the phosphoproteome in a refined SCX-based approach.</title>
        <authorList>
            <person name="Gauci S."/>
            <person name="Helbig A.O."/>
            <person name="Slijper M."/>
            <person name="Krijgsveld J."/>
            <person name="Heck A.J."/>
            <person name="Mohammed S."/>
        </authorList>
    </citation>
    <scope>IDENTIFICATION BY MASS SPECTROMETRY [LARGE SCALE ANALYSIS]</scope>
</reference>
<reference key="12">
    <citation type="journal article" date="2009" name="Sci. Signal.">
        <title>Quantitative phosphoproteomic analysis of T cell receptor signaling reveals system-wide modulation of protein-protein interactions.</title>
        <authorList>
            <person name="Mayya V."/>
            <person name="Lundgren D.H."/>
            <person name="Hwang S.-I."/>
            <person name="Rezaul K."/>
            <person name="Wu L."/>
            <person name="Eng J.K."/>
            <person name="Rodionov V."/>
            <person name="Han D.K."/>
        </authorList>
    </citation>
    <scope>IDENTIFICATION BY MASS SPECTROMETRY [LARGE SCALE ANALYSIS]</scope>
    <source>
        <tissue>Leukemic T-cell</tissue>
    </source>
</reference>
<reference key="13">
    <citation type="journal article" date="2010" name="Sci. Signal.">
        <title>Quantitative phosphoproteomics reveals widespread full phosphorylation site occupancy during mitosis.</title>
        <authorList>
            <person name="Olsen J.V."/>
            <person name="Vermeulen M."/>
            <person name="Santamaria A."/>
            <person name="Kumar C."/>
            <person name="Miller M.L."/>
            <person name="Jensen L.J."/>
            <person name="Gnad F."/>
            <person name="Cox J."/>
            <person name="Jensen T.S."/>
            <person name="Nigg E.A."/>
            <person name="Brunak S."/>
            <person name="Mann M."/>
        </authorList>
    </citation>
    <scope>PHOSPHORYLATION [LARGE SCALE ANALYSIS] AT SER-1452</scope>
    <scope>IDENTIFICATION BY MASS SPECTROMETRY [LARGE SCALE ANALYSIS]</scope>
    <source>
        <tissue>Cervix carcinoma</tissue>
    </source>
</reference>
<reference key="14">
    <citation type="journal article" date="2011" name="BMC Syst. Biol.">
        <title>Initial characterization of the human central proteome.</title>
        <authorList>
            <person name="Burkard T.R."/>
            <person name="Planyavsky M."/>
            <person name="Kaupe I."/>
            <person name="Breitwieser F.P."/>
            <person name="Buerckstuemmer T."/>
            <person name="Bennett K.L."/>
            <person name="Superti-Furga G."/>
            <person name="Colinge J."/>
        </authorList>
    </citation>
    <scope>IDENTIFICATION BY MASS SPECTROMETRY [LARGE SCALE ANALYSIS]</scope>
</reference>
<reference key="15">
    <citation type="journal article" date="2012" name="J. Cell Biol.">
        <title>Rab10 and myosin-Va mediate insulin-stimulated GLUT4 storage vesicle translocation in adipocytes.</title>
        <authorList>
            <person name="Chen Y."/>
            <person name="Wang Y."/>
            <person name="Zhang J."/>
            <person name="Deng Y."/>
            <person name="Jiang L."/>
            <person name="Song E."/>
            <person name="Wu X.S."/>
            <person name="Hammer J.A."/>
            <person name="Xu T."/>
            <person name="Lippincott-Schwartz J."/>
        </authorList>
    </citation>
    <scope>INTERACTION WITH RAB10</scope>
</reference>
<reference key="16">
    <citation type="journal article" date="2012" name="Proc. Natl. Acad. Sci. U.S.A.">
        <title>N-terminal acetylome analyses and functional insights of the N-terminal acetyltransferase NatB.</title>
        <authorList>
            <person name="Van Damme P."/>
            <person name="Lasa M."/>
            <person name="Polevoda B."/>
            <person name="Gazquez C."/>
            <person name="Elosegui-Artola A."/>
            <person name="Kim D.S."/>
            <person name="De Juan-Pardo E."/>
            <person name="Demeyer K."/>
            <person name="Hole K."/>
            <person name="Larrea E."/>
            <person name="Timmerman E."/>
            <person name="Prieto J."/>
            <person name="Arnesen T."/>
            <person name="Sherman F."/>
            <person name="Gevaert K."/>
            <person name="Aldabe R."/>
        </authorList>
    </citation>
    <scope>ACETYLATION [LARGE SCALE ANALYSIS] AT ALA-2</scope>
    <scope>CLEAVAGE OF INITIATOR METHIONINE [LARGE SCALE ANALYSIS]</scope>
    <scope>IDENTIFICATION BY MASS SPECTROMETRY [LARGE SCALE ANALYSIS]</scope>
</reference>
<reference key="17">
    <citation type="journal article" date="2013" name="J. Proteome Res.">
        <title>Toward a comprehensive characterization of a human cancer cell phosphoproteome.</title>
        <authorList>
            <person name="Zhou H."/>
            <person name="Di Palma S."/>
            <person name="Preisinger C."/>
            <person name="Peng M."/>
            <person name="Polat A.N."/>
            <person name="Heck A.J."/>
            <person name="Mohammed S."/>
        </authorList>
    </citation>
    <scope>PHOSPHORYLATION [LARGE SCALE ANALYSIS] AT SER-600 AND SER-1652</scope>
    <scope>IDENTIFICATION BY MASS SPECTROMETRY [LARGE SCALE ANALYSIS]</scope>
    <source>
        <tissue>Cervix carcinoma</tissue>
    </source>
</reference>
<reference key="18">
    <citation type="journal article" date="2000" name="J. Invest. Dermatol.">
        <title>Arg-Cys substitution at codon 1246 of the human myosin Va gene is not associated with Griscelli syndrome.</title>
        <authorList>
            <person name="Lambert J."/>
            <person name="Naeyaert J.-M."/>
            <person name="De Paepe A."/>
            <person name="Van Coster R."/>
            <person name="Ferster A."/>
            <person name="Song M."/>
            <person name="Messiaen L."/>
        </authorList>
    </citation>
    <scope>VARIANT CYS-1246</scope>
</reference>
<reference key="19">
    <citation type="journal article" date="2000" name="Genomics">
        <title>Two genes are responsible for Griscelli syndrome at the same 15q21 locus.</title>
        <authorList>
            <person name="Pastural E."/>
            <person name="Ersoy F."/>
            <person name="Yalman N."/>
            <person name="Wulffraat N."/>
            <person name="Grillo E."/>
            <person name="Ozkinay F."/>
            <person name="Tezcan I."/>
            <person name="Gedikoglu G."/>
            <person name="Philippe N."/>
            <person name="Fischer A."/>
            <person name="de Saint Basile G."/>
        </authorList>
    </citation>
    <scope>INVOLVEMENT IN GS1</scope>
</reference>
<reference key="20">
    <citation type="journal article" date="2002" name="Am. J. Hum. Genet.">
        <title>Evidence that Griscelli syndrome with neurological involvement is caused by mutations in RAB27A, not MYO5A.</title>
        <authorList>
            <person name="Anikster Y."/>
            <person name="Huizing M."/>
            <person name="Anderson P.D."/>
            <person name="Fitzpatrick D.L."/>
            <person name="Klar A."/>
            <person name="Gross-Kieselstein E."/>
            <person name="Berkun Y."/>
            <person name="Shazberg G."/>
            <person name="Gahl W.A."/>
            <person name="Hurvitz H."/>
        </authorList>
    </citation>
    <scope>INVOLVEMENT IN GS1</scope>
</reference>
<reference key="21">
    <citation type="journal article" date="2002" name="Am. J. Hum. Genet.">
        <authorList>
            <person name="Anikster Y."/>
            <person name="Huizing M."/>
            <person name="Anderson P.D."/>
            <person name="Fitzpatrick D.L."/>
            <person name="Klar A."/>
            <person name="Gross-Kieselstein E."/>
            <person name="Berkun Y."/>
            <person name="Shazberg G."/>
            <person name="Gahl W.A."/>
            <person name="Hurvitz H."/>
        </authorList>
    </citation>
    <scope>ERRATUM OF PUBMED:12058346</scope>
</reference>
<reference key="22">
    <citation type="journal article" date="2003" name="J. Clin. Invest.">
        <title>Griscelli syndrome restricted to hypopigmentation results from a melanophilin defect (GS3) or a MYO5A F-exon deletion (GS1).</title>
        <authorList>
            <person name="Menasche G."/>
            <person name="Ho C.H."/>
            <person name="Sanal O."/>
            <person name="Feldmann J."/>
            <person name="Tezcan I."/>
            <person name="Ersoy F."/>
            <person name="Houdusse A."/>
            <person name="Fischer A."/>
            <person name="de Saint Basile G."/>
        </authorList>
    </citation>
    <scope>INVOLVEMENT IN GS1</scope>
</reference>
<keyword id="KW-0002">3D-structure</keyword>
<keyword id="KW-0007">Acetylation</keyword>
<keyword id="KW-0009">Actin-binding</keyword>
<keyword id="KW-0025">Alternative splicing</keyword>
<keyword id="KW-0067">ATP-binding</keyword>
<keyword id="KW-0112">Calmodulin-binding</keyword>
<keyword id="KW-0175">Coiled coil</keyword>
<keyword id="KW-0505">Motor protein</keyword>
<keyword id="KW-0518">Myosin</keyword>
<keyword id="KW-0547">Nucleotide-binding</keyword>
<keyword id="KW-0597">Phosphoprotein</keyword>
<keyword id="KW-0653">Protein transport</keyword>
<keyword id="KW-1267">Proteomics identification</keyword>
<keyword id="KW-1185">Reference proteome</keyword>
<keyword id="KW-0677">Repeat</keyword>
<keyword id="KW-0813">Transport</keyword>
<feature type="initiator methionine" description="Removed" evidence="24">
    <location>
        <position position="1"/>
    </location>
</feature>
<feature type="chain" id="PRO_0000123456" description="Unconventional myosin-Va">
    <location>
        <begin position="2"/>
        <end position="1855"/>
    </location>
</feature>
<feature type="domain" description="Myosin N-terminal SH3-like" evidence="7">
    <location>
        <begin position="8"/>
        <end position="60"/>
    </location>
</feature>
<feature type="domain" description="Myosin motor" evidence="6">
    <location>
        <begin position="69"/>
        <end position="763"/>
    </location>
</feature>
<feature type="domain" description="IQ 1" evidence="4">
    <location>
        <begin position="766"/>
        <end position="788"/>
    </location>
</feature>
<feature type="domain" description="IQ 2" evidence="4">
    <location>
        <begin position="789"/>
        <end position="818"/>
    </location>
</feature>
<feature type="domain" description="IQ 3" evidence="4">
    <location>
        <begin position="814"/>
        <end position="836"/>
    </location>
</feature>
<feature type="domain" description="IQ 4" evidence="4">
    <location>
        <begin position="837"/>
        <end position="861"/>
    </location>
</feature>
<feature type="domain" description="IQ 5" evidence="4">
    <location>
        <begin position="862"/>
        <end position="883"/>
    </location>
</feature>
<feature type="domain" description="IQ 6" evidence="4">
    <location>
        <begin position="885"/>
        <end position="914"/>
    </location>
</feature>
<feature type="domain" description="Dilute" evidence="5">
    <location>
        <begin position="1534"/>
        <end position="1810"/>
    </location>
</feature>
<feature type="region of interest" description="Disordered" evidence="8">
    <location>
        <begin position="598"/>
        <end position="631"/>
    </location>
</feature>
<feature type="region of interest" description="Actin-binding" evidence="3">
    <location>
        <begin position="643"/>
        <end position="665"/>
    </location>
</feature>
<feature type="coiled-coil region" evidence="3">
    <location>
        <begin position="914"/>
        <end position="1237"/>
    </location>
</feature>
<feature type="coiled-coil region" evidence="3">
    <location>
        <begin position="1338"/>
        <end position="1445"/>
    </location>
</feature>
<feature type="compositionally biased region" description="Polar residues" evidence="8">
    <location>
        <begin position="600"/>
        <end position="613"/>
    </location>
</feature>
<feature type="binding site" evidence="3">
    <location>
        <begin position="163"/>
        <end position="170"/>
    </location>
    <ligand>
        <name>ATP</name>
        <dbReference type="ChEBI" id="CHEBI:30616"/>
    </ligand>
</feature>
<feature type="modified residue" description="N-acetylalanine" evidence="24">
    <location>
        <position position="2"/>
    </location>
</feature>
<feature type="modified residue" description="Phosphoserine" evidence="25">
    <location>
        <position position="600"/>
    </location>
</feature>
<feature type="modified residue" description="Phosphothreonine" evidence="2">
    <location>
        <position position="1032"/>
    </location>
</feature>
<feature type="modified residue" description="Phosphoserine" evidence="23">
    <location>
        <position position="1452"/>
    </location>
</feature>
<feature type="modified residue" description="Phosphoserine" evidence="25">
    <location>
        <position position="1652"/>
    </location>
</feature>
<feature type="modified residue" description="Phosphothreonine" evidence="3">
    <location>
        <position position="1760"/>
    </location>
</feature>
<feature type="splice variant" id="VSP_003351" description="In isoform 2." evidence="17 18 19">
    <location>
        <begin position="1321"/>
        <end position="1347"/>
    </location>
</feature>
<feature type="splice variant" id="VSP_003352" description="In isoform 3." evidence="20">
    <original>L</original>
    <variation>LYFEELYADDPKKYQSYRISLYKRMI</variation>
    <location>
        <position position="1413"/>
    </location>
</feature>
<feature type="sequence variant" id="VAR_056180" description="In dbSNP:rs16964944.">
    <original>M</original>
    <variation>T</variation>
    <location>
        <position position="627"/>
    </location>
</feature>
<feature type="sequence variant" id="VAR_010645" description="In dbSNP:rs1058219." evidence="11 16">
    <original>R</original>
    <variation>C</variation>
    <location>
        <position position="1246"/>
    </location>
</feature>
<feature type="sequence variant" id="VAR_056181" description="In dbSNP:rs9282796.">
    <original>S</original>
    <variation>L</variation>
    <location>
        <position position="1673"/>
    </location>
</feature>
<feature type="sequence conflict" description="In Ref. 1; CAA69035/CAA69036 and 2; AAD00702." evidence="21" ref="1 2">
    <original>A</original>
    <variation>T</variation>
    <location>
        <position position="198"/>
    </location>
</feature>
<feature type="sequence conflict" description="In Ref. 1; CAA69035/CAA69036 and 2; AAD00702." evidence="21" ref="1 2">
    <original>E</original>
    <variation>D</variation>
    <location>
        <position position="362"/>
    </location>
</feature>
<feature type="sequence conflict" description="In Ref. 1; CAA69035/CAA69036." evidence="21" ref="1">
    <original>F</original>
    <variation>L</variation>
    <location>
        <position position="668"/>
    </location>
</feature>
<feature type="sequence conflict" description="In Ref. 5; CAA80533." evidence="21" ref="5">
    <location>
        <position position="833"/>
    </location>
</feature>
<feature type="sequence conflict" description="In Ref. 1; CAA69035/CAA69036." evidence="21" ref="1">
    <original>E</original>
    <variation>G</variation>
    <location>
        <position position="863"/>
    </location>
</feature>
<feature type="sequence conflict" description="In Ref. 1; CAA69035/CAA69036." evidence="21" ref="1">
    <original>H</original>
    <variation>R</variation>
    <location>
        <position position="922"/>
    </location>
</feature>
<feature type="sequence conflict" description="In Ref. 6; AAB33211." evidence="21" ref="6">
    <original>V</original>
    <variation>L</variation>
    <location>
        <position position="1061"/>
    </location>
</feature>
<feature type="sequence conflict" description="In Ref. 5; CAA80533." evidence="21" ref="5">
    <original>E</original>
    <variation>Q</variation>
    <location>
        <position position="1089"/>
    </location>
</feature>
<feature type="sequence conflict" description="In Ref. 6; AAB33211." evidence="21" ref="6">
    <original>D</original>
    <variation>E</variation>
    <location>
        <position position="1177"/>
    </location>
</feature>
<feature type="sequence conflict" description="In Ref. 5; CAA80533." evidence="21" ref="5">
    <original>NIPRKEKDFQGML</original>
    <variation>SVLCACCVSVTVR</variation>
    <location>
        <begin position="1465"/>
        <end position="1477"/>
    </location>
</feature>
<feature type="sequence conflict" description="In Ref. 6; AAB33211." evidence="21" ref="6">
    <original>K</original>
    <variation>N</variation>
    <location>
        <position position="1471"/>
    </location>
</feature>
<feature type="sequence conflict" description="In Ref. 6; AAB33211." evidence="21" ref="6">
    <original>E</original>
    <variation>D</variation>
    <location>
        <position position="1484"/>
    </location>
</feature>
<feature type="strand" evidence="26">
    <location>
        <begin position="1285"/>
        <end position="1289"/>
    </location>
</feature>
<feature type="strand" evidence="28">
    <location>
        <begin position="1475"/>
        <end position="1478"/>
    </location>
</feature>
<feature type="helix" evidence="28">
    <location>
        <begin position="1481"/>
        <end position="1483"/>
    </location>
</feature>
<feature type="helix" evidence="28">
    <location>
        <begin position="1484"/>
        <end position="1491"/>
    </location>
</feature>
<feature type="turn" evidence="28">
    <location>
        <begin position="1492"/>
        <end position="1494"/>
    </location>
</feature>
<feature type="helix" evidence="28">
    <location>
        <begin position="1500"/>
        <end position="1502"/>
    </location>
</feature>
<feature type="turn" evidence="27">
    <location>
        <begin position="1505"/>
        <end position="1507"/>
    </location>
</feature>
<feature type="helix" evidence="28">
    <location>
        <begin position="1508"/>
        <end position="1522"/>
    </location>
</feature>
<feature type="helix" evidence="28">
    <location>
        <begin position="1526"/>
        <end position="1547"/>
    </location>
</feature>
<feature type="helix" evidence="28">
    <location>
        <begin position="1551"/>
        <end position="1570"/>
    </location>
</feature>
<feature type="helix" evidence="28">
    <location>
        <begin position="1575"/>
        <end position="1577"/>
    </location>
</feature>
<feature type="helix" evidence="28">
    <location>
        <begin position="1583"/>
        <end position="1586"/>
    </location>
</feature>
<feature type="strand" evidence="28">
    <location>
        <begin position="1591"/>
        <end position="1594"/>
    </location>
</feature>
<feature type="helix" evidence="28">
    <location>
        <begin position="1596"/>
        <end position="1621"/>
    </location>
</feature>
<feature type="helix" evidence="28">
    <location>
        <begin position="1622"/>
        <end position="1624"/>
    </location>
</feature>
<feature type="helix" evidence="28">
    <location>
        <begin position="1625"/>
        <end position="1629"/>
    </location>
</feature>
<feature type="helix" evidence="28">
    <location>
        <begin position="1661"/>
        <end position="1677"/>
    </location>
</feature>
<feature type="helix" evidence="28">
    <location>
        <begin position="1682"/>
        <end position="1706"/>
    </location>
</feature>
<feature type="strand" evidence="28">
    <location>
        <begin position="1708"/>
        <end position="1710"/>
    </location>
</feature>
<feature type="helix" evidence="28">
    <location>
        <begin position="1713"/>
        <end position="1732"/>
    </location>
</feature>
<feature type="helix" evidence="28">
    <location>
        <begin position="1740"/>
        <end position="1743"/>
    </location>
</feature>
<feature type="helix" evidence="28">
    <location>
        <begin position="1745"/>
        <end position="1755"/>
    </location>
</feature>
<feature type="helix" evidence="28">
    <location>
        <begin position="1761"/>
        <end position="1770"/>
    </location>
</feature>
<feature type="helix" evidence="28">
    <location>
        <begin position="1776"/>
        <end position="1785"/>
    </location>
</feature>
<feature type="strand" evidence="29">
    <location>
        <begin position="1790"/>
        <end position="1792"/>
    </location>
</feature>
<feature type="helix" evidence="28">
    <location>
        <begin position="1798"/>
        <end position="1807"/>
    </location>
</feature>
<feature type="turn" evidence="28">
    <location>
        <begin position="1808"/>
        <end position="1810"/>
    </location>
</feature>
<feature type="helix" evidence="28">
    <location>
        <begin position="1838"/>
        <end position="1840"/>
    </location>
</feature>
<feature type="helix" evidence="28">
    <location>
        <begin position="1845"/>
        <end position="1847"/>
    </location>
</feature>
<feature type="strand" evidence="28">
    <location>
        <begin position="1852"/>
        <end position="1855"/>
    </location>
</feature>
<accession>Q9Y4I1</accession>
<accession>A8MZC5</accession>
<accession>O60653</accession>
<accession>Q07902</accession>
<accession>Q16249</accession>
<accession>Q9UE30</accession>
<accession>Q9UE31</accession>
<organism>
    <name type="scientific">Homo sapiens</name>
    <name type="common">Human</name>
    <dbReference type="NCBI Taxonomy" id="9606"/>
    <lineage>
        <taxon>Eukaryota</taxon>
        <taxon>Metazoa</taxon>
        <taxon>Chordata</taxon>
        <taxon>Craniata</taxon>
        <taxon>Vertebrata</taxon>
        <taxon>Euteleostomi</taxon>
        <taxon>Mammalia</taxon>
        <taxon>Eutheria</taxon>
        <taxon>Euarchontoglires</taxon>
        <taxon>Primates</taxon>
        <taxon>Haplorrhini</taxon>
        <taxon>Catarrhini</taxon>
        <taxon>Hominidae</taxon>
        <taxon>Homo</taxon>
    </lineage>
</organism>
<gene>
    <name type="primary">MYO5A</name>
    <name type="synonym">MYH12</name>
</gene>
<protein>
    <recommendedName>
        <fullName>Unconventional myosin-Va</fullName>
    </recommendedName>
    <alternativeName>
        <fullName>Dilute myosin heavy chain, non-muscle</fullName>
    </alternativeName>
    <alternativeName>
        <fullName>Myosin heavy chain 12</fullName>
    </alternativeName>
    <alternativeName>
        <fullName>Myosin-12</fullName>
    </alternativeName>
    <alternativeName>
        <fullName>Myoxin</fullName>
    </alternativeName>
</protein>
<sequence>MAASELYTKFARVWIPDPEEVWKSAELLKDYKPGDKVLLLHLEEGKDLEYHLDPKTKELPHLRNPDILVGENDLTALSYLHEPAVLHNLRVRFIDSKLIYTYCGIVLVAINPYEQLPIYGEDIINAYSGQNMGDMDPHIFAVAEEAYKQMARDERNQSIIVSGESGAGKTVSAKYAMRYFATVSGSASEANVEEKVLASNPIMESIGNAKTTRNDNSSRFGKYIEIGFDKRYRIIGANMRTYLLEKSRVVFQAEEERNYHIFYQLCASAKLPEFKMLRLGNADNFNYTKQGGSPVIEGVDDAKEMAHTRQACTLLGISESHQMGIFRILAGILHLGNVGFTSRDADSCTIPPKHEPLCIFCELMGVDYEEMCHWLCHRKLATATETYIKPISKLQATNARDALAKHIYAKLFNWIVDNVNQALHSAVKQHSFIGVLDIYGFETFEINSFEQFCINYANEKLQQQFNMHVFKLEQEEYMKEQIPWTLIDFYDNQPCINLIESKLGILDLLDEECKMPKGTDDTWAQKLYNTHLNKCALFEKPRLSNKAFIIQHFADKVEYQCEGFLEKNKDTVFEEQIKVLKSSKFKMLPELFQDDEKAISPTSATSSGRTPLTRTPAKPTKGRPGQMAKEHKKTVGHQFRNSLHLLMETLNATTPHYVRCIKPNDFKFPFTFDEKRAVQQLRACGVLETIRISAAGFPSRWTYQEFFSRYRVLMKQKDVLSDRKQTCKNVLEKLILDKDKYQFGKTKIFFRAGQVAYLEKLRADKLRAACIRIQKTIRGWLLRKKYLRMRKAAITMQRYVRGYQARCYAKFLRRTKAATIIQKYWRMYVVRRRYKIRRAATIVLQSYLRGFLARNRYRKILREHKAVIIQKRVRGWLARTHYKRSMHAIIYLQCCFRRMMAKRELKKLKIEARSVERYKKLHIGMENKIMQLQRKVDEQNKDYKCLVEKLTNLEGIYNSETEKLRSDLERLQLSEEEAKVATGRVLSLQEEIAKLRKDLEQTRSEKKCIEEHADRYKQETEQLVSNLKEENTLLKQEKEALNHRIVQQAKEMTETMEKKLVEETKQLELDLNDERLRYQNLLNEFSRLEERYDDLKEEMTLMVHVPKPGHKRTDSTHSSNESEYIFSSEIAEMEDIPSRTEEPSEKKVPLDMSLFLKLQKRVTELEQEKQVMQDELDRKEEQVLRSKAKEEERPQIRGAELEYESLKRQELESENKKLKNELNELRKALSEKSAPEVTAPGAPAYRVLMEQLTSVSEELDVRKEEVLILRSQLVSQKEAIQPKDDKNTMTDSTILLEDVQKMKDKGEIAQAYIGLKETNRSSALDYHELNEDGELWLVYEGLKQANRLLESQLQSQKRSHENEAEALRGEIQSLKEENNRQQQLLAQNLQLPPEARIEASLQHEITRLTNENLDLMEQLEKQDKTVRKLKKQLKVFAKKIGELEVGQMENISPGQIIDEPIRPVNIPRKEKDFQGMLEYKKEDEQKLVKNLILELKPRGVAVNLIPGLPAYILFMCVRHADYLNDDQKVRSLLTSTINSIKKVLKKRGDDFETVSFWLSNTCRFLHCLKQYSGEEGFMKHNTSRQNEHCLTNFDLAEYRQVLSDLAIQIYQQLVRVLENILQPMIVSGMLEHETIQGVSGVKPTGLRKRTSSIADEGTYTLDSILRQLNSFHSVMCQHGMDPELIKQVVKQMFYIIGAITLNNLLLRKDMCSWSKGMQIRYNVSQLEEWLRDKNLMNSGAKETLEPLIQAAQLLQVKKKTDDDAEAICSMCNALTTAQIVKVLNLYTPVNEFEERVSVSFIRTIQMRLRDRKDSPQLLMDAKHIFPVTFPFNPSSLALETIQIPASLGLGFISRV</sequence>
<dbReference type="EMBL" id="Y07759">
    <property type="protein sequence ID" value="CAA69035.1"/>
    <property type="molecule type" value="mRNA"/>
</dbReference>
<dbReference type="EMBL" id="Y07759">
    <property type="protein sequence ID" value="CAA69036.1"/>
    <property type="molecule type" value="mRNA"/>
</dbReference>
<dbReference type="EMBL" id="U90942">
    <property type="protein sequence ID" value="AAD00702.1"/>
    <property type="molecule type" value="mRNA"/>
</dbReference>
<dbReference type="EMBL" id="AC010674">
    <property type="status" value="NOT_ANNOTATED_CDS"/>
    <property type="molecule type" value="Genomic_DNA"/>
</dbReference>
<dbReference type="EMBL" id="AC018902">
    <property type="status" value="NOT_ANNOTATED_CDS"/>
    <property type="molecule type" value="Genomic_DNA"/>
</dbReference>
<dbReference type="EMBL" id="AC025917">
    <property type="status" value="NOT_ANNOTATED_CDS"/>
    <property type="molecule type" value="Genomic_DNA"/>
</dbReference>
<dbReference type="EMBL" id="Z22957">
    <property type="protein sequence ID" value="CAA80533.1"/>
    <property type="molecule type" value="mRNA"/>
</dbReference>
<dbReference type="EMBL" id="S74799">
    <property type="protein sequence ID" value="AAB33211.1"/>
    <property type="molecule type" value="mRNA"/>
</dbReference>
<dbReference type="EMBL" id="AF055459">
    <property type="protein sequence ID" value="AAC14188.1"/>
    <property type="molecule type" value="mRNA"/>
</dbReference>
<dbReference type="CCDS" id="CCDS42037.1">
    <molecule id="Q9Y4I1-1"/>
</dbReference>
<dbReference type="CCDS" id="CCDS45262.1">
    <molecule id="Q9Y4I1-2"/>
</dbReference>
<dbReference type="CCDS" id="CCDS92001.1">
    <molecule id="Q9Y4I1-3"/>
</dbReference>
<dbReference type="PIR" id="A53016">
    <property type="entry name" value="A53016"/>
</dbReference>
<dbReference type="PIR" id="A59254">
    <property type="entry name" value="A59254"/>
</dbReference>
<dbReference type="PIR" id="B59254">
    <property type="entry name" value="B59254"/>
</dbReference>
<dbReference type="PIR" id="I52966">
    <property type="entry name" value="I52966"/>
</dbReference>
<dbReference type="RefSeq" id="NP_000250.3">
    <property type="nucleotide sequence ID" value="NM_000259.3"/>
</dbReference>
<dbReference type="RefSeq" id="NP_001135967.2">
    <molecule id="Q9Y4I1-2"/>
    <property type="nucleotide sequence ID" value="NM_001142495.2"/>
</dbReference>
<dbReference type="RefSeq" id="NP_001369276.1">
    <molecule id="Q9Y4I1-3"/>
    <property type="nucleotide sequence ID" value="NM_001382347.1"/>
</dbReference>
<dbReference type="RefSeq" id="XP_005254454.1">
    <property type="nucleotide sequence ID" value="XM_005254397.3"/>
</dbReference>
<dbReference type="PDB" id="4D07">
    <property type="method" value="X-ray"/>
    <property type="resolution" value="1.85 A"/>
    <property type="chains" value="B=1275-1297"/>
</dbReference>
<dbReference type="PDB" id="4J5L">
    <property type="method" value="X-ray"/>
    <property type="resolution" value="2.20 A"/>
    <property type="chains" value="A/B=1448-1855"/>
</dbReference>
<dbReference type="PDB" id="4LLI">
    <property type="method" value="X-ray"/>
    <property type="resolution" value="2.20 A"/>
    <property type="chains" value="A/B=1467-1855"/>
</dbReference>
<dbReference type="PDB" id="4LX1">
    <property type="method" value="X-ray"/>
    <property type="resolution" value="1.87 A"/>
    <property type="chains" value="A/B=1464-1855"/>
</dbReference>
<dbReference type="PDB" id="4LX2">
    <property type="method" value="X-ray"/>
    <property type="resolution" value="1.50 A"/>
    <property type="chains" value="A=1464-1855"/>
</dbReference>
<dbReference type="PDB" id="5JCY">
    <property type="method" value="X-ray"/>
    <property type="resolution" value="1.80 A"/>
    <property type="chains" value="A=1464-1855"/>
</dbReference>
<dbReference type="PDB" id="5JCZ">
    <property type="method" value="X-ray"/>
    <property type="resolution" value="2.06 A"/>
    <property type="chains" value="B/C/E=1464-1855"/>
</dbReference>
<dbReference type="PDBsum" id="4D07"/>
<dbReference type="PDBsum" id="4J5L"/>
<dbReference type="PDBsum" id="4LLI"/>
<dbReference type="PDBsum" id="4LX1"/>
<dbReference type="PDBsum" id="4LX2"/>
<dbReference type="PDBsum" id="5JCY"/>
<dbReference type="PDBsum" id="5JCZ"/>
<dbReference type="SMR" id="Q9Y4I1"/>
<dbReference type="BioGRID" id="110728">
    <property type="interactions" value="216"/>
</dbReference>
<dbReference type="CORUM" id="Q9Y4I1"/>
<dbReference type="FunCoup" id="Q9Y4I1">
    <property type="interactions" value="1914"/>
</dbReference>
<dbReference type="IntAct" id="Q9Y4I1">
    <property type="interactions" value="112"/>
</dbReference>
<dbReference type="MINT" id="Q9Y4I1"/>
<dbReference type="STRING" id="9606.ENSP00000382177"/>
<dbReference type="CarbonylDB" id="Q9Y4I1"/>
<dbReference type="GlyGen" id="Q9Y4I1">
    <property type="glycosylation" value="2 sites, 1 O-linked glycan (1 site)"/>
</dbReference>
<dbReference type="iPTMnet" id="Q9Y4I1"/>
<dbReference type="MetOSite" id="Q9Y4I1"/>
<dbReference type="PhosphoSitePlus" id="Q9Y4I1"/>
<dbReference type="SwissPalm" id="Q9Y4I1"/>
<dbReference type="BioMuta" id="MYO5A"/>
<dbReference type="DMDM" id="296439234"/>
<dbReference type="jPOST" id="Q9Y4I1"/>
<dbReference type="MassIVE" id="Q9Y4I1"/>
<dbReference type="PaxDb" id="9606-ENSP00000382177"/>
<dbReference type="PeptideAtlas" id="Q9Y4I1"/>
<dbReference type="ProteomicsDB" id="86207">
    <molecule id="Q9Y4I1-1"/>
</dbReference>
<dbReference type="ProteomicsDB" id="86208">
    <molecule id="Q9Y4I1-2"/>
</dbReference>
<dbReference type="ProteomicsDB" id="86209">
    <molecule id="Q9Y4I1-3"/>
</dbReference>
<dbReference type="Pumba" id="Q9Y4I1"/>
<dbReference type="Antibodypedia" id="686">
    <property type="antibodies" value="159 antibodies from 31 providers"/>
</dbReference>
<dbReference type="DNASU" id="4644"/>
<dbReference type="Ensembl" id="ENST00000399231.8">
    <molecule id="Q9Y4I1-1"/>
    <property type="protein sequence ID" value="ENSP00000382177.3"/>
    <property type="gene ID" value="ENSG00000197535.16"/>
</dbReference>
<dbReference type="Ensembl" id="ENST00000399233.7">
    <molecule id="Q9Y4I1-3"/>
    <property type="protein sequence ID" value="ENSP00000382179.4"/>
    <property type="gene ID" value="ENSG00000197535.16"/>
</dbReference>
<dbReference type="Ensembl" id="ENST00000687574.1">
    <molecule id="Q9Y4I1-2"/>
    <property type="protein sequence ID" value="ENSP00000510312.1"/>
    <property type="gene ID" value="ENSG00000197535.16"/>
</dbReference>
<dbReference type="GeneID" id="4644"/>
<dbReference type="KEGG" id="hsa:4644"/>
<dbReference type="MANE-Select" id="ENST00000399233.7">
    <molecule id="Q9Y4I1-3"/>
    <property type="protein sequence ID" value="ENSP00000382179.4"/>
    <property type="RefSeq nucleotide sequence ID" value="NM_001382347.1"/>
    <property type="RefSeq protein sequence ID" value="NP_001369276.1"/>
</dbReference>
<dbReference type="UCSC" id="uc002abx.5">
    <molecule id="Q9Y4I1-1"/>
    <property type="organism name" value="human"/>
</dbReference>
<dbReference type="AGR" id="HGNC:7602"/>
<dbReference type="CTD" id="4644"/>
<dbReference type="DisGeNET" id="4644"/>
<dbReference type="GeneCards" id="MYO5A"/>
<dbReference type="HGNC" id="HGNC:7602">
    <property type="gene designation" value="MYO5A"/>
</dbReference>
<dbReference type="HPA" id="ENSG00000197535">
    <property type="expression patterns" value="Tissue enhanced (brain, parathyroid gland)"/>
</dbReference>
<dbReference type="MalaCards" id="MYO5A"/>
<dbReference type="MIM" id="160777">
    <property type="type" value="gene"/>
</dbReference>
<dbReference type="MIM" id="214450">
    <property type="type" value="phenotype"/>
</dbReference>
<dbReference type="neXtProt" id="NX_Q9Y4I1"/>
<dbReference type="OpenTargets" id="ENSG00000197535"/>
<dbReference type="Orphanet" id="79476">
    <property type="disease" value="Griscelli syndrome type 1"/>
</dbReference>
<dbReference type="Orphanet" id="79478">
    <property type="disease" value="Griscelli syndrome type 3"/>
</dbReference>
<dbReference type="Orphanet" id="33445">
    <property type="disease" value="Neuroectodermal melanolysosomal disease"/>
</dbReference>
<dbReference type="PharmGKB" id="PA31407"/>
<dbReference type="VEuPathDB" id="HostDB:ENSG00000197535"/>
<dbReference type="eggNOG" id="KOG0160">
    <property type="taxonomic scope" value="Eukaryota"/>
</dbReference>
<dbReference type="GeneTree" id="ENSGT00940000155347"/>
<dbReference type="HOGENOM" id="CLU_000192_9_2_1"/>
<dbReference type="InParanoid" id="Q9Y4I1"/>
<dbReference type="OMA" id="GKSKHFE"/>
<dbReference type="OrthoDB" id="6108017at2759"/>
<dbReference type="PAN-GO" id="Q9Y4I1">
    <property type="GO annotations" value="6 GO annotations based on evolutionary models"/>
</dbReference>
<dbReference type="PhylomeDB" id="Q9Y4I1"/>
<dbReference type="TreeFam" id="TF328771"/>
<dbReference type="PathwayCommons" id="Q9Y4I1"/>
<dbReference type="Reactome" id="R-HSA-1445148">
    <property type="pathway name" value="Translocation of SLC2A4 (GLUT4) to the plasma membrane"/>
</dbReference>
<dbReference type="Reactome" id="R-HSA-2029482">
    <property type="pathway name" value="Regulation of actin dynamics for phagocytic cup formation"/>
</dbReference>
<dbReference type="Reactome" id="R-HSA-264876">
    <property type="pathway name" value="Insulin processing"/>
</dbReference>
<dbReference type="Reactome" id="R-HSA-9664422">
    <property type="pathway name" value="FCGR3A-mediated phagocytosis"/>
</dbReference>
<dbReference type="Reactome" id="R-HSA-9824585">
    <property type="pathway name" value="Regulation of MITF-M-dependent genes involved in pigmentation"/>
</dbReference>
<dbReference type="SignaLink" id="Q9Y4I1"/>
<dbReference type="SIGNOR" id="Q9Y4I1"/>
<dbReference type="BioGRID-ORCS" id="4644">
    <property type="hits" value="10 hits in 1147 CRISPR screens"/>
</dbReference>
<dbReference type="CD-CODE" id="232F8A39">
    <property type="entry name" value="P-body"/>
</dbReference>
<dbReference type="CD-CODE" id="FB4E32DD">
    <property type="entry name" value="Presynaptic clusters and postsynaptic densities"/>
</dbReference>
<dbReference type="ChiTaRS" id="MYO5A">
    <property type="organism name" value="human"/>
</dbReference>
<dbReference type="EvolutionaryTrace" id="Q9Y4I1"/>
<dbReference type="GeneWiki" id="MYO5A"/>
<dbReference type="GenomeRNAi" id="4644"/>
<dbReference type="Pharos" id="Q9Y4I1">
    <property type="development level" value="Tbio"/>
</dbReference>
<dbReference type="PRO" id="PR:Q9Y4I1"/>
<dbReference type="Proteomes" id="UP000005640">
    <property type="component" value="Chromosome 15"/>
</dbReference>
<dbReference type="RNAct" id="Q9Y4I1">
    <property type="molecule type" value="protein"/>
</dbReference>
<dbReference type="Bgee" id="ENSG00000197535">
    <property type="expression patterns" value="Expressed in lateral nuclear group of thalamus and 192 other cell types or tissues"/>
</dbReference>
<dbReference type="ExpressionAtlas" id="Q9Y4I1">
    <property type="expression patterns" value="baseline and differential"/>
</dbReference>
<dbReference type="GO" id="GO:0015629">
    <property type="term" value="C:actin cytoskeleton"/>
    <property type="evidence" value="ECO:0000318"/>
    <property type="project" value="GO_Central"/>
</dbReference>
<dbReference type="GO" id="GO:0005737">
    <property type="term" value="C:cytoplasm"/>
    <property type="evidence" value="ECO:0000314"/>
    <property type="project" value="UniProtKB"/>
</dbReference>
<dbReference type="GO" id="GO:0005829">
    <property type="term" value="C:cytosol"/>
    <property type="evidence" value="ECO:0000314"/>
    <property type="project" value="UniProtKB"/>
</dbReference>
<dbReference type="GO" id="GO:0070062">
    <property type="term" value="C:extracellular exosome"/>
    <property type="evidence" value="ECO:0007005"/>
    <property type="project" value="UniProtKB"/>
</dbReference>
<dbReference type="GO" id="GO:0032433">
    <property type="term" value="C:filopodium tip"/>
    <property type="evidence" value="ECO:0000314"/>
    <property type="project" value="UniProtKB"/>
</dbReference>
<dbReference type="GO" id="GO:0030426">
    <property type="term" value="C:growth cone"/>
    <property type="evidence" value="ECO:0000303"/>
    <property type="project" value="UniProtKB"/>
</dbReference>
<dbReference type="GO" id="GO:0032593">
    <property type="term" value="C:insulin-responsive compartment"/>
    <property type="evidence" value="ECO:0000250"/>
    <property type="project" value="UniProtKB"/>
</dbReference>
<dbReference type="GO" id="GO:0042470">
    <property type="term" value="C:melanosome"/>
    <property type="evidence" value="ECO:0000314"/>
    <property type="project" value="UniProtKB"/>
</dbReference>
<dbReference type="GO" id="GO:0016020">
    <property type="term" value="C:membrane"/>
    <property type="evidence" value="ECO:0000314"/>
    <property type="project" value="UniProtKB"/>
</dbReference>
<dbReference type="GO" id="GO:0016459">
    <property type="term" value="C:myosin complex"/>
    <property type="evidence" value="ECO:0007669"/>
    <property type="project" value="UniProtKB-KW"/>
</dbReference>
<dbReference type="GO" id="GO:0043005">
    <property type="term" value="C:neuron projection"/>
    <property type="evidence" value="ECO:0000303"/>
    <property type="project" value="UniProtKB"/>
</dbReference>
<dbReference type="GO" id="GO:0001726">
    <property type="term" value="C:ruffle"/>
    <property type="evidence" value="ECO:0000314"/>
    <property type="project" value="UniProtKB"/>
</dbReference>
<dbReference type="GO" id="GO:0051015">
    <property type="term" value="F:actin filament binding"/>
    <property type="evidence" value="ECO:0000318"/>
    <property type="project" value="GO_Central"/>
</dbReference>
<dbReference type="GO" id="GO:0005524">
    <property type="term" value="F:ATP binding"/>
    <property type="evidence" value="ECO:0007669"/>
    <property type="project" value="UniProtKB-KW"/>
</dbReference>
<dbReference type="GO" id="GO:0016887">
    <property type="term" value="F:ATP hydrolysis activity"/>
    <property type="evidence" value="ECO:0000314"/>
    <property type="project" value="UniProtKB"/>
</dbReference>
<dbReference type="GO" id="GO:0005516">
    <property type="term" value="F:calmodulin binding"/>
    <property type="evidence" value="ECO:0007669"/>
    <property type="project" value="UniProtKB-KW"/>
</dbReference>
<dbReference type="GO" id="GO:0000146">
    <property type="term" value="F:microfilament motor activity"/>
    <property type="evidence" value="ECO:0000318"/>
    <property type="project" value="GO_Central"/>
</dbReference>
<dbReference type="GO" id="GO:0003723">
    <property type="term" value="F:RNA binding"/>
    <property type="evidence" value="ECO:0007005"/>
    <property type="project" value="UniProtKB"/>
</dbReference>
<dbReference type="GO" id="GO:0031267">
    <property type="term" value="F:small GTPase binding"/>
    <property type="evidence" value="ECO:0000353"/>
    <property type="project" value="UniProtKB"/>
</dbReference>
<dbReference type="GO" id="GO:0007015">
    <property type="term" value="P:actin filament organization"/>
    <property type="evidence" value="ECO:0000318"/>
    <property type="project" value="GO_Central"/>
</dbReference>
<dbReference type="GO" id="GO:0030048">
    <property type="term" value="P:actin filament-based movement"/>
    <property type="evidence" value="ECO:0000303"/>
    <property type="project" value="UniProtKB"/>
</dbReference>
<dbReference type="GO" id="GO:0032869">
    <property type="term" value="P:cellular response to insulin stimulus"/>
    <property type="evidence" value="ECO:0000250"/>
    <property type="project" value="UniProtKB"/>
</dbReference>
<dbReference type="GO" id="GO:0032402">
    <property type="term" value="P:melanosome transport"/>
    <property type="evidence" value="ECO:0000303"/>
    <property type="project" value="UniProtKB"/>
</dbReference>
<dbReference type="GO" id="GO:0006892">
    <property type="term" value="P:post-Golgi vesicle-mediated transport"/>
    <property type="evidence" value="ECO:0000315"/>
    <property type="project" value="UniProtKB"/>
</dbReference>
<dbReference type="GO" id="GO:0072659">
    <property type="term" value="P:protein localization to plasma membrane"/>
    <property type="evidence" value="ECO:0000250"/>
    <property type="project" value="UniProtKB"/>
</dbReference>
<dbReference type="GO" id="GO:0015031">
    <property type="term" value="P:protein transport"/>
    <property type="evidence" value="ECO:0007669"/>
    <property type="project" value="UniProtKB-KW"/>
</dbReference>
<dbReference type="GO" id="GO:0030050">
    <property type="term" value="P:vesicle transport along actin filament"/>
    <property type="evidence" value="ECO:0000315"/>
    <property type="project" value="UniProtKB"/>
</dbReference>
<dbReference type="GO" id="GO:0016192">
    <property type="term" value="P:vesicle-mediated transport"/>
    <property type="evidence" value="ECO:0000250"/>
    <property type="project" value="UniProtKB"/>
</dbReference>
<dbReference type="CDD" id="cd23767">
    <property type="entry name" value="IQCD"/>
    <property type="match status" value="1"/>
</dbReference>
<dbReference type="CDD" id="cd15478">
    <property type="entry name" value="Myo5a_CBD"/>
    <property type="match status" value="1"/>
</dbReference>
<dbReference type="CDD" id="cd01380">
    <property type="entry name" value="MYSc_Myo5"/>
    <property type="match status" value="1"/>
</dbReference>
<dbReference type="FunFam" id="1.20.58.530:FF:000002">
    <property type="entry name" value="Class V myosin"/>
    <property type="match status" value="1"/>
</dbReference>
<dbReference type="FunFam" id="1.10.10.820:FF:000001">
    <property type="entry name" value="Myosin heavy chain"/>
    <property type="match status" value="1"/>
</dbReference>
<dbReference type="FunFam" id="1.20.5.190:FF:000006">
    <property type="entry name" value="Myosin VA"/>
    <property type="match status" value="1"/>
</dbReference>
<dbReference type="FunFam" id="3.40.850.10:FF:000089">
    <property type="entry name" value="Myosin VC"/>
    <property type="match status" value="1"/>
</dbReference>
<dbReference type="FunFam" id="3.30.70.1590:FF:000003">
    <property type="entry name" value="Myosin-Va isoform 1"/>
    <property type="match status" value="1"/>
</dbReference>
<dbReference type="FunFam" id="1.20.5.190:FF:000001">
    <property type="entry name" value="unconventional myosin-Va"/>
    <property type="match status" value="2"/>
</dbReference>
<dbReference type="Gene3D" id="1.10.10.820">
    <property type="match status" value="1"/>
</dbReference>
<dbReference type="Gene3D" id="1.20.5.190">
    <property type="match status" value="3"/>
</dbReference>
<dbReference type="Gene3D" id="1.20.58.530">
    <property type="match status" value="1"/>
</dbReference>
<dbReference type="Gene3D" id="3.30.70.1590">
    <property type="match status" value="1"/>
</dbReference>
<dbReference type="Gene3D" id="3.40.850.10">
    <property type="entry name" value="Kinesin motor domain"/>
    <property type="match status" value="1"/>
</dbReference>
<dbReference type="Gene3D" id="1.20.120.720">
    <property type="entry name" value="Myosin VI head, motor domain, U50 subdomain"/>
    <property type="match status" value="1"/>
</dbReference>
<dbReference type="InterPro" id="IPR002710">
    <property type="entry name" value="Dilute_dom"/>
</dbReference>
<dbReference type="InterPro" id="IPR000048">
    <property type="entry name" value="IQ_motif_EF-hand-BS"/>
</dbReference>
<dbReference type="InterPro" id="IPR036961">
    <property type="entry name" value="Kinesin_motor_dom_sf"/>
</dbReference>
<dbReference type="InterPro" id="IPR037988">
    <property type="entry name" value="Myo5a_CBD"/>
</dbReference>
<dbReference type="InterPro" id="IPR001609">
    <property type="entry name" value="Myosin_head_motor_dom-like"/>
</dbReference>
<dbReference type="InterPro" id="IPR004009">
    <property type="entry name" value="Myosin_N"/>
</dbReference>
<dbReference type="InterPro" id="IPR036103">
    <property type="entry name" value="MYSc_Myo5"/>
</dbReference>
<dbReference type="InterPro" id="IPR027417">
    <property type="entry name" value="P-loop_NTPase"/>
</dbReference>
<dbReference type="PANTHER" id="PTHR13140">
    <property type="entry name" value="MYOSIN"/>
    <property type="match status" value="1"/>
</dbReference>
<dbReference type="PANTHER" id="PTHR13140:SF273">
    <property type="entry name" value="UNCONVENTIONAL MYOSIN-VA"/>
    <property type="match status" value="1"/>
</dbReference>
<dbReference type="Pfam" id="PF01843">
    <property type="entry name" value="DIL"/>
    <property type="match status" value="1"/>
</dbReference>
<dbReference type="Pfam" id="PF00612">
    <property type="entry name" value="IQ"/>
    <property type="match status" value="6"/>
</dbReference>
<dbReference type="Pfam" id="PF00063">
    <property type="entry name" value="Myosin_head"/>
    <property type="match status" value="1"/>
</dbReference>
<dbReference type="PRINTS" id="PR00193">
    <property type="entry name" value="MYOSINHEAVY"/>
</dbReference>
<dbReference type="SMART" id="SM01132">
    <property type="entry name" value="DIL"/>
    <property type="match status" value="1"/>
</dbReference>
<dbReference type="SMART" id="SM00015">
    <property type="entry name" value="IQ"/>
    <property type="match status" value="6"/>
</dbReference>
<dbReference type="SMART" id="SM00242">
    <property type="entry name" value="MYSc"/>
    <property type="match status" value="1"/>
</dbReference>
<dbReference type="SUPFAM" id="SSF52540">
    <property type="entry name" value="P-loop containing nucleoside triphosphate hydrolases"/>
    <property type="match status" value="3"/>
</dbReference>
<dbReference type="PROSITE" id="PS51126">
    <property type="entry name" value="DILUTE"/>
    <property type="match status" value="1"/>
</dbReference>
<dbReference type="PROSITE" id="PS50096">
    <property type="entry name" value="IQ"/>
    <property type="match status" value="6"/>
</dbReference>
<dbReference type="PROSITE" id="PS51456">
    <property type="entry name" value="MYOSIN_MOTOR"/>
    <property type="match status" value="1"/>
</dbReference>
<dbReference type="PROSITE" id="PS51844">
    <property type="entry name" value="SH3_LIKE"/>
    <property type="match status" value="1"/>
</dbReference>
<proteinExistence type="evidence at protein level"/>
<comment type="function">
    <text evidence="1 2 9">Processive actin-based motor that can move in large steps approximating the 36-nm pseudo-repeat of the actin filament. Can hydrolyze ATP in the presence of actin, which is essential for its function as a motor protein (PubMed:10448864). Involved in melanosome transport. Also mediates the transport of vesicles to the plasma membrane (By similarity). May also be required for some polarization process involved in dendrite formation (By similarity).</text>
</comment>
<comment type="catalytic activity">
    <reaction evidence="9">
        <text>ATP + H2O = ADP + phosphate + H(+)</text>
        <dbReference type="Rhea" id="RHEA:13065"/>
        <dbReference type="ChEBI" id="CHEBI:15377"/>
        <dbReference type="ChEBI" id="CHEBI:15378"/>
        <dbReference type="ChEBI" id="CHEBI:30616"/>
        <dbReference type="ChEBI" id="CHEBI:43474"/>
        <dbReference type="ChEBI" id="CHEBI:456216"/>
    </reaction>
    <physiologicalReaction direction="left-to-right" evidence="22">
        <dbReference type="Rhea" id="RHEA:13066"/>
    </physiologicalReaction>
</comment>
<comment type="subunit">
    <text evidence="1 13 15">May be a homodimer, which associates with multiple calmodulin or myosin light chains (By similarity). Interacts with RIPL2, the interaction is required for its role in dendrite formation (By similarity). Interacts with MLPH (PubMed:12062444). Interacts with SYTL4 (By similarity). Interacts with MYRIP (By similarity). Interacts with RAB10; mediates the transport to the plasma membrane of SLC2A4/GLUT4 storage vesicles (PubMed:22908308). Interacts with FMR1; this interaction occurs in association with polyribosome (By similarity).</text>
</comment>
<comment type="alternative products">
    <event type="alternative splicing"/>
    <isoform>
        <id>Q9Y4I1-1</id>
        <name>1</name>
        <sequence type="displayed"/>
    </isoform>
    <isoform>
        <id>Q9Y4I1-2</id>
        <name>2</name>
        <sequence type="described" ref="VSP_003351"/>
    </isoform>
    <isoform>
        <id>Q9Y4I1-3</id>
        <name>3</name>
        <sequence type="described" ref="VSP_003352"/>
    </isoform>
</comment>
<comment type="tissue specificity">
    <text>Detected in melanocytes.</text>
</comment>
<comment type="disease" evidence="10 12 14">
    <disease id="DI-01686">
        <name>Griscelli syndrome 1</name>
        <acronym>GS1</acronym>
        <description>Rare autosomal recessive disorder that results in pigmentary dilution of the skin and hair, the presence of large clumps of pigment in hair shafts, silvery-gray hair and accumulation of melanosomes in melanocytes. GS1 patients show developmental delay, hypotonia and intellectual disability, without apparent immune abnormalities.</description>
        <dbReference type="MIM" id="214450"/>
    </disease>
    <text evidence="12">The disease is caused by variants affecting the gene represented in this entry. Some patients who have MYO5A pathogenic variants and originally diagnosed with Griscelli syndrome 1 may rather have Elejalde syndrome.</text>
</comment>
<comment type="similarity">
    <text evidence="21">Belongs to the TRAFAC class myosin-kinesin ATPase superfamily. Myosin family.</text>
</comment>
<comment type="online information" name="MYO5Abase">
    <link uri="https://databases.lovd.nl/shared/genes/MYO5A"/>
    <text>MYO5A mutation db</text>
</comment>